<organism>
    <name type="scientific">Prochlorococcus marinus (strain MIT 9312)</name>
    <dbReference type="NCBI Taxonomy" id="74546"/>
    <lineage>
        <taxon>Bacteria</taxon>
        <taxon>Bacillati</taxon>
        <taxon>Cyanobacteriota</taxon>
        <taxon>Cyanophyceae</taxon>
        <taxon>Synechococcales</taxon>
        <taxon>Prochlorococcaceae</taxon>
        <taxon>Prochlorococcus</taxon>
    </lineage>
</organism>
<feature type="chain" id="PRO_0000230053" description="Glutamate 5-kinase">
    <location>
        <begin position="1"/>
        <end position="360"/>
    </location>
</feature>
<feature type="domain" description="PUA" evidence="1">
    <location>
        <begin position="275"/>
        <end position="356"/>
    </location>
</feature>
<feature type="binding site" evidence="1">
    <location>
        <position position="7"/>
    </location>
    <ligand>
        <name>ATP</name>
        <dbReference type="ChEBI" id="CHEBI:30616"/>
    </ligand>
</feature>
<feature type="binding site" evidence="1">
    <location>
        <position position="47"/>
    </location>
    <ligand>
        <name>substrate</name>
    </ligand>
</feature>
<feature type="binding site" evidence="1">
    <location>
        <position position="134"/>
    </location>
    <ligand>
        <name>substrate</name>
    </ligand>
</feature>
<feature type="binding site" evidence="1">
    <location>
        <position position="146"/>
    </location>
    <ligand>
        <name>substrate</name>
    </ligand>
</feature>
<feature type="binding site" evidence="1">
    <location>
        <begin position="166"/>
        <end position="167"/>
    </location>
    <ligand>
        <name>ATP</name>
        <dbReference type="ChEBI" id="CHEBI:30616"/>
    </ligand>
</feature>
<feature type="binding site" evidence="1">
    <location>
        <begin position="210"/>
        <end position="216"/>
    </location>
    <ligand>
        <name>ATP</name>
        <dbReference type="ChEBI" id="CHEBI:30616"/>
    </ligand>
</feature>
<accession>Q31B89</accession>
<dbReference type="EC" id="2.7.2.11" evidence="1"/>
<dbReference type="EMBL" id="CP000111">
    <property type="protein sequence ID" value="ABB49856.1"/>
    <property type="molecule type" value="Genomic_DNA"/>
</dbReference>
<dbReference type="RefSeq" id="WP_011376351.1">
    <property type="nucleotide sequence ID" value="NC_007577.1"/>
</dbReference>
<dbReference type="SMR" id="Q31B89"/>
<dbReference type="STRING" id="74546.PMT9312_0796"/>
<dbReference type="KEGG" id="pmi:PMT9312_0796"/>
<dbReference type="eggNOG" id="COG0263">
    <property type="taxonomic scope" value="Bacteria"/>
</dbReference>
<dbReference type="HOGENOM" id="CLU_025400_2_0_3"/>
<dbReference type="OrthoDB" id="9804434at2"/>
<dbReference type="UniPathway" id="UPA00098">
    <property type="reaction ID" value="UER00359"/>
</dbReference>
<dbReference type="Proteomes" id="UP000002715">
    <property type="component" value="Chromosome"/>
</dbReference>
<dbReference type="GO" id="GO:0005829">
    <property type="term" value="C:cytosol"/>
    <property type="evidence" value="ECO:0007669"/>
    <property type="project" value="TreeGrafter"/>
</dbReference>
<dbReference type="GO" id="GO:0005524">
    <property type="term" value="F:ATP binding"/>
    <property type="evidence" value="ECO:0007669"/>
    <property type="project" value="UniProtKB-KW"/>
</dbReference>
<dbReference type="GO" id="GO:0004349">
    <property type="term" value="F:glutamate 5-kinase activity"/>
    <property type="evidence" value="ECO:0007669"/>
    <property type="project" value="UniProtKB-UniRule"/>
</dbReference>
<dbReference type="GO" id="GO:0003723">
    <property type="term" value="F:RNA binding"/>
    <property type="evidence" value="ECO:0007669"/>
    <property type="project" value="InterPro"/>
</dbReference>
<dbReference type="GO" id="GO:0055129">
    <property type="term" value="P:L-proline biosynthetic process"/>
    <property type="evidence" value="ECO:0007669"/>
    <property type="project" value="UniProtKB-UniRule"/>
</dbReference>
<dbReference type="CDD" id="cd04242">
    <property type="entry name" value="AAK_G5K_ProB"/>
    <property type="match status" value="1"/>
</dbReference>
<dbReference type="CDD" id="cd21157">
    <property type="entry name" value="PUA_G5K"/>
    <property type="match status" value="1"/>
</dbReference>
<dbReference type="FunFam" id="3.40.1160.10:FF:000018">
    <property type="entry name" value="Glutamate 5-kinase"/>
    <property type="match status" value="1"/>
</dbReference>
<dbReference type="Gene3D" id="3.40.1160.10">
    <property type="entry name" value="Acetylglutamate kinase-like"/>
    <property type="match status" value="1"/>
</dbReference>
<dbReference type="Gene3D" id="2.30.130.10">
    <property type="entry name" value="PUA domain"/>
    <property type="match status" value="1"/>
</dbReference>
<dbReference type="HAMAP" id="MF_00456">
    <property type="entry name" value="ProB"/>
    <property type="match status" value="1"/>
</dbReference>
<dbReference type="InterPro" id="IPR036393">
    <property type="entry name" value="AceGlu_kinase-like_sf"/>
</dbReference>
<dbReference type="InterPro" id="IPR001048">
    <property type="entry name" value="Asp/Glu/Uridylate_kinase"/>
</dbReference>
<dbReference type="InterPro" id="IPR041739">
    <property type="entry name" value="G5K_ProB"/>
</dbReference>
<dbReference type="InterPro" id="IPR001057">
    <property type="entry name" value="Glu/AcGlu_kinase"/>
</dbReference>
<dbReference type="InterPro" id="IPR011529">
    <property type="entry name" value="Glu_5kinase"/>
</dbReference>
<dbReference type="InterPro" id="IPR005715">
    <property type="entry name" value="Glu_5kinase/COase_Synthase"/>
</dbReference>
<dbReference type="InterPro" id="IPR019797">
    <property type="entry name" value="Glutamate_5-kinase_CS"/>
</dbReference>
<dbReference type="InterPro" id="IPR002478">
    <property type="entry name" value="PUA"/>
</dbReference>
<dbReference type="InterPro" id="IPR015947">
    <property type="entry name" value="PUA-like_sf"/>
</dbReference>
<dbReference type="InterPro" id="IPR036974">
    <property type="entry name" value="PUA_sf"/>
</dbReference>
<dbReference type="NCBIfam" id="TIGR01027">
    <property type="entry name" value="proB"/>
    <property type="match status" value="1"/>
</dbReference>
<dbReference type="PANTHER" id="PTHR43654">
    <property type="entry name" value="GLUTAMATE 5-KINASE"/>
    <property type="match status" value="1"/>
</dbReference>
<dbReference type="PANTHER" id="PTHR43654:SF3">
    <property type="entry name" value="GLUTAMATE 5-KINASE"/>
    <property type="match status" value="1"/>
</dbReference>
<dbReference type="Pfam" id="PF00696">
    <property type="entry name" value="AA_kinase"/>
    <property type="match status" value="1"/>
</dbReference>
<dbReference type="Pfam" id="PF01472">
    <property type="entry name" value="PUA"/>
    <property type="match status" value="1"/>
</dbReference>
<dbReference type="PIRSF" id="PIRSF000729">
    <property type="entry name" value="GK"/>
    <property type="match status" value="1"/>
</dbReference>
<dbReference type="PRINTS" id="PR00474">
    <property type="entry name" value="GLU5KINASE"/>
</dbReference>
<dbReference type="SMART" id="SM00359">
    <property type="entry name" value="PUA"/>
    <property type="match status" value="1"/>
</dbReference>
<dbReference type="SUPFAM" id="SSF53633">
    <property type="entry name" value="Carbamate kinase-like"/>
    <property type="match status" value="1"/>
</dbReference>
<dbReference type="SUPFAM" id="SSF88697">
    <property type="entry name" value="PUA domain-like"/>
    <property type="match status" value="1"/>
</dbReference>
<dbReference type="PROSITE" id="PS00902">
    <property type="entry name" value="GLUTAMATE_5_KINASE"/>
    <property type="match status" value="1"/>
</dbReference>
<dbReference type="PROSITE" id="PS50890">
    <property type="entry name" value="PUA"/>
    <property type="match status" value="1"/>
</dbReference>
<sequence length="360" mass="39331">MKTWVIKIGTSILRGTEETSTEEVIETLCRSFTSFLLKGNKLILVTSGAVGLGCQKLNIKTRPNDLSTLQATAAVGQVNLMSLYDKIFNKLGHNIAQILITKADFNSRESFNNASKTLKKLIDLNVIPIVNENDTVANEELKYGDNDTLSALVALAINANKLILLTDIENLYSKDPRKNKDAHPIKEVHNSELKEIKNKNNQNSNNEWGTGGISTKLISAEIATKGGVEVQLVDGTNKKNLIEIFNDNKIGTLFYPLEKPIGNKKSWLSHAIHTVGKITLDDGAFFAINKKGASLLAVGVKNVEGNFTVNQAVKIVNTDNKEVAKGLVSISSDNLRSILNNKDNNNSSIIVVHRDVLALS</sequence>
<comment type="function">
    <text evidence="1">Catalyzes the transfer of a phosphate group to glutamate to form L-glutamate 5-phosphate.</text>
</comment>
<comment type="catalytic activity">
    <reaction evidence="1">
        <text>L-glutamate + ATP = L-glutamyl 5-phosphate + ADP</text>
        <dbReference type="Rhea" id="RHEA:14877"/>
        <dbReference type="ChEBI" id="CHEBI:29985"/>
        <dbReference type="ChEBI" id="CHEBI:30616"/>
        <dbReference type="ChEBI" id="CHEBI:58274"/>
        <dbReference type="ChEBI" id="CHEBI:456216"/>
        <dbReference type="EC" id="2.7.2.11"/>
    </reaction>
</comment>
<comment type="pathway">
    <text evidence="1">Amino-acid biosynthesis; L-proline biosynthesis; L-glutamate 5-semialdehyde from L-glutamate: step 1/2.</text>
</comment>
<comment type="subcellular location">
    <subcellularLocation>
        <location evidence="1">Cytoplasm</location>
    </subcellularLocation>
</comment>
<comment type="similarity">
    <text evidence="1">Belongs to the glutamate 5-kinase family.</text>
</comment>
<evidence type="ECO:0000255" key="1">
    <source>
        <dbReference type="HAMAP-Rule" id="MF_00456"/>
    </source>
</evidence>
<keyword id="KW-0028">Amino-acid biosynthesis</keyword>
<keyword id="KW-0067">ATP-binding</keyword>
<keyword id="KW-0963">Cytoplasm</keyword>
<keyword id="KW-0418">Kinase</keyword>
<keyword id="KW-0547">Nucleotide-binding</keyword>
<keyword id="KW-0641">Proline biosynthesis</keyword>
<keyword id="KW-0808">Transferase</keyword>
<gene>
    <name evidence="1" type="primary">proB</name>
    <name type="ordered locus">PMT9312_0796</name>
</gene>
<name>PROB_PROM9</name>
<proteinExistence type="inferred from homology"/>
<protein>
    <recommendedName>
        <fullName evidence="1">Glutamate 5-kinase</fullName>
        <ecNumber evidence="1">2.7.2.11</ecNumber>
    </recommendedName>
    <alternativeName>
        <fullName evidence="1">Gamma-glutamyl kinase</fullName>
        <shortName evidence="1">GK</shortName>
    </alternativeName>
</protein>
<reference key="1">
    <citation type="journal article" date="2006" name="Science">
        <title>Genomic islands and the ecology and evolution of Prochlorococcus.</title>
        <authorList>
            <person name="Coleman M.L."/>
            <person name="Sullivan M.B."/>
            <person name="Martiny A.C."/>
            <person name="Steglich C."/>
            <person name="Barry K."/>
            <person name="Delong E.F."/>
            <person name="Chisholm S.W."/>
        </authorList>
    </citation>
    <scope>NUCLEOTIDE SEQUENCE [LARGE SCALE GENOMIC DNA]</scope>
    <source>
        <strain>MIT 9312</strain>
    </source>
</reference>